<name>KPYK_COREF</name>
<sequence>MERRTKIVCTLGPAVASADGILRLVQDGMDVARLNFSHGDHPDHEQNYKWVREATDKTGRAVGILADLQGPKIRLGRFKEGSTVWETGETVRITVDDVEGTHDRVSTTYKNLAKDARPGDRLLVDDGKVGLVCVSVEGNDVICEVTEGGPVSNNKGVSLPGMDISVPALSEKDIKDLRFALKLGVDFIALSFVRSPADVELVHAIMDEEGRRVPVIAKLEKPEAVAALESIVLAFDAIMVARGDLGVEVPLEEVPLVQKRAIQIARENAKPVIVATQMLDSMIENSRPTRAEASDVANAVLDGADAVMLSGETSVGKDPHNVVRTMSRIVRFAETDGRVPDLTHIPRTKRGVISYSARDIAERLNARALVAFTTSGDTAKRLARLHSHLPLLVFTPDPSVRSQLALTWGAQTFLCPKVDDTDGMMREVDRALLAMDEYQKDDMMVVVAGSPPGVTGNTNMIHVHLLGEDTRIPK</sequence>
<proteinExistence type="inferred from homology"/>
<feature type="chain" id="PRO_0000112067" description="Pyruvate kinase">
    <location>
        <begin position="1"/>
        <end position="474"/>
    </location>
</feature>
<feature type="binding site" evidence="1">
    <location>
        <position position="33"/>
    </location>
    <ligand>
        <name>substrate</name>
    </ligand>
</feature>
<feature type="binding site" evidence="2">
    <location>
        <begin position="35"/>
        <end position="38"/>
    </location>
    <ligand>
        <name>ATP</name>
        <dbReference type="ChEBI" id="CHEBI:30616"/>
    </ligand>
</feature>
<feature type="binding site" evidence="1">
    <location>
        <position position="35"/>
    </location>
    <ligand>
        <name>K(+)</name>
        <dbReference type="ChEBI" id="CHEBI:29103"/>
    </ligand>
</feature>
<feature type="binding site" evidence="1">
    <location>
        <position position="37"/>
    </location>
    <ligand>
        <name>K(+)</name>
        <dbReference type="ChEBI" id="CHEBI:29103"/>
    </ligand>
</feature>
<feature type="binding site" evidence="1">
    <location>
        <position position="67"/>
    </location>
    <ligand>
        <name>K(+)</name>
        <dbReference type="ChEBI" id="CHEBI:29103"/>
    </ligand>
</feature>
<feature type="binding site" evidence="2">
    <location>
        <position position="74"/>
    </location>
    <ligand>
        <name>ATP</name>
        <dbReference type="ChEBI" id="CHEBI:30616"/>
    </ligand>
</feature>
<feature type="binding site" evidence="2">
    <location>
        <position position="155"/>
    </location>
    <ligand>
        <name>ATP</name>
        <dbReference type="ChEBI" id="CHEBI:30616"/>
    </ligand>
</feature>
<feature type="binding site" evidence="1">
    <location>
        <position position="220"/>
    </location>
    <ligand>
        <name>Mg(2+)</name>
        <dbReference type="ChEBI" id="CHEBI:18420"/>
    </ligand>
</feature>
<feature type="binding site" evidence="1">
    <location>
        <position position="243"/>
    </location>
    <ligand>
        <name>substrate</name>
    </ligand>
</feature>
<feature type="binding site" evidence="1">
    <location>
        <position position="244"/>
    </location>
    <ligand>
        <name>Mg(2+)</name>
        <dbReference type="ChEBI" id="CHEBI:18420"/>
    </ligand>
</feature>
<feature type="binding site" evidence="1">
    <location>
        <position position="244"/>
    </location>
    <ligand>
        <name>substrate</name>
    </ligand>
</feature>
<feature type="binding site" evidence="1">
    <location>
        <position position="276"/>
    </location>
    <ligand>
        <name>substrate</name>
    </ligand>
</feature>
<feature type="site" description="Transition state stabilizer" evidence="1">
    <location>
        <position position="218"/>
    </location>
</feature>
<comment type="catalytic activity">
    <reaction>
        <text>pyruvate + ATP = phosphoenolpyruvate + ADP + H(+)</text>
        <dbReference type="Rhea" id="RHEA:18157"/>
        <dbReference type="ChEBI" id="CHEBI:15361"/>
        <dbReference type="ChEBI" id="CHEBI:15378"/>
        <dbReference type="ChEBI" id="CHEBI:30616"/>
        <dbReference type="ChEBI" id="CHEBI:58702"/>
        <dbReference type="ChEBI" id="CHEBI:456216"/>
        <dbReference type="EC" id="2.7.1.40"/>
    </reaction>
</comment>
<comment type="cofactor">
    <cofactor evidence="1">
        <name>Mg(2+)</name>
        <dbReference type="ChEBI" id="CHEBI:18420"/>
    </cofactor>
</comment>
<comment type="cofactor">
    <cofactor evidence="1">
        <name>K(+)</name>
        <dbReference type="ChEBI" id="CHEBI:29103"/>
    </cofactor>
</comment>
<comment type="pathway">
    <text>Carbohydrate degradation; glycolysis; pyruvate from D-glyceraldehyde 3-phosphate: step 5/5.</text>
</comment>
<comment type="subunit">
    <text evidence="1">Homotetramer.</text>
</comment>
<comment type="similarity">
    <text evidence="3">Belongs to the pyruvate kinase family.</text>
</comment>
<comment type="sequence caution" evidence="3">
    <conflict type="erroneous initiation">
        <sequence resource="EMBL-CDS" id="BAC18799"/>
    </conflict>
</comment>
<accession>Q8FP04</accession>
<evidence type="ECO:0000250" key="1"/>
<evidence type="ECO:0000250" key="2">
    <source>
        <dbReference type="UniProtKB" id="P14618"/>
    </source>
</evidence>
<evidence type="ECO:0000305" key="3"/>
<protein>
    <recommendedName>
        <fullName>Pyruvate kinase</fullName>
        <shortName>PK</shortName>
        <ecNumber>2.7.1.40</ecNumber>
    </recommendedName>
</protein>
<keyword id="KW-0067">ATP-binding</keyword>
<keyword id="KW-0324">Glycolysis</keyword>
<keyword id="KW-0418">Kinase</keyword>
<keyword id="KW-0460">Magnesium</keyword>
<keyword id="KW-0479">Metal-binding</keyword>
<keyword id="KW-0547">Nucleotide-binding</keyword>
<keyword id="KW-0630">Potassium</keyword>
<keyword id="KW-0670">Pyruvate</keyword>
<keyword id="KW-1185">Reference proteome</keyword>
<keyword id="KW-0808">Transferase</keyword>
<gene>
    <name type="primary">pyk</name>
    <name type="ordered locus">CE1989</name>
</gene>
<dbReference type="EC" id="2.7.1.40"/>
<dbReference type="EMBL" id="BA000035">
    <property type="protein sequence ID" value="BAC18799.1"/>
    <property type="status" value="ALT_INIT"/>
    <property type="molecule type" value="Genomic_DNA"/>
</dbReference>
<dbReference type="RefSeq" id="WP_006767987.1">
    <property type="nucleotide sequence ID" value="NC_004369.1"/>
</dbReference>
<dbReference type="SMR" id="Q8FP04"/>
<dbReference type="STRING" id="196164.gene:10742417"/>
<dbReference type="KEGG" id="cef:CE1989"/>
<dbReference type="eggNOG" id="COG0469">
    <property type="taxonomic scope" value="Bacteria"/>
</dbReference>
<dbReference type="HOGENOM" id="CLU_015439_0_2_11"/>
<dbReference type="OrthoDB" id="9812123at2"/>
<dbReference type="UniPathway" id="UPA00109">
    <property type="reaction ID" value="UER00188"/>
</dbReference>
<dbReference type="Proteomes" id="UP000001409">
    <property type="component" value="Chromosome"/>
</dbReference>
<dbReference type="GO" id="GO:0005524">
    <property type="term" value="F:ATP binding"/>
    <property type="evidence" value="ECO:0007669"/>
    <property type="project" value="UniProtKB-KW"/>
</dbReference>
<dbReference type="GO" id="GO:0016301">
    <property type="term" value="F:kinase activity"/>
    <property type="evidence" value="ECO:0007669"/>
    <property type="project" value="UniProtKB-KW"/>
</dbReference>
<dbReference type="GO" id="GO:0000287">
    <property type="term" value="F:magnesium ion binding"/>
    <property type="evidence" value="ECO:0007669"/>
    <property type="project" value="InterPro"/>
</dbReference>
<dbReference type="GO" id="GO:0030955">
    <property type="term" value="F:potassium ion binding"/>
    <property type="evidence" value="ECO:0007669"/>
    <property type="project" value="InterPro"/>
</dbReference>
<dbReference type="GO" id="GO:0004743">
    <property type="term" value="F:pyruvate kinase activity"/>
    <property type="evidence" value="ECO:0007669"/>
    <property type="project" value="UniProtKB-EC"/>
</dbReference>
<dbReference type="FunFam" id="2.40.33.10:FF:000001">
    <property type="entry name" value="Pyruvate kinase"/>
    <property type="match status" value="1"/>
</dbReference>
<dbReference type="FunFam" id="3.40.1380.20:FF:000009">
    <property type="entry name" value="Pyruvate kinase"/>
    <property type="match status" value="1"/>
</dbReference>
<dbReference type="Gene3D" id="3.20.20.60">
    <property type="entry name" value="Phosphoenolpyruvate-binding domains"/>
    <property type="match status" value="1"/>
</dbReference>
<dbReference type="Gene3D" id="2.40.33.10">
    <property type="entry name" value="PK beta-barrel domain-like"/>
    <property type="match status" value="1"/>
</dbReference>
<dbReference type="Gene3D" id="3.40.1380.20">
    <property type="entry name" value="Pyruvate kinase, C-terminal domain"/>
    <property type="match status" value="1"/>
</dbReference>
<dbReference type="InterPro" id="IPR001697">
    <property type="entry name" value="Pyr_Knase"/>
</dbReference>
<dbReference type="InterPro" id="IPR015813">
    <property type="entry name" value="Pyrv/PenolPyrv_kinase-like_dom"/>
</dbReference>
<dbReference type="InterPro" id="IPR040442">
    <property type="entry name" value="Pyrv_kinase-like_dom_sf"/>
</dbReference>
<dbReference type="InterPro" id="IPR011037">
    <property type="entry name" value="Pyrv_Knase-like_insert_dom_sf"/>
</dbReference>
<dbReference type="InterPro" id="IPR018209">
    <property type="entry name" value="Pyrv_Knase_AS"/>
</dbReference>
<dbReference type="InterPro" id="IPR015793">
    <property type="entry name" value="Pyrv_Knase_brl"/>
</dbReference>
<dbReference type="InterPro" id="IPR015795">
    <property type="entry name" value="Pyrv_Knase_C"/>
</dbReference>
<dbReference type="InterPro" id="IPR036918">
    <property type="entry name" value="Pyrv_Knase_C_sf"/>
</dbReference>
<dbReference type="InterPro" id="IPR015806">
    <property type="entry name" value="Pyrv_Knase_insert_dom_sf"/>
</dbReference>
<dbReference type="NCBIfam" id="NF004491">
    <property type="entry name" value="PRK05826.1"/>
    <property type="match status" value="1"/>
</dbReference>
<dbReference type="NCBIfam" id="NF004886">
    <property type="entry name" value="PRK06247.1"/>
    <property type="match status" value="1"/>
</dbReference>
<dbReference type="NCBIfam" id="NF004978">
    <property type="entry name" value="PRK06354.1"/>
    <property type="match status" value="1"/>
</dbReference>
<dbReference type="NCBIfam" id="TIGR01064">
    <property type="entry name" value="pyruv_kin"/>
    <property type="match status" value="1"/>
</dbReference>
<dbReference type="PANTHER" id="PTHR11817">
    <property type="entry name" value="PYRUVATE KINASE"/>
    <property type="match status" value="1"/>
</dbReference>
<dbReference type="Pfam" id="PF00224">
    <property type="entry name" value="PK"/>
    <property type="match status" value="1"/>
</dbReference>
<dbReference type="Pfam" id="PF02887">
    <property type="entry name" value="PK_C"/>
    <property type="match status" value="1"/>
</dbReference>
<dbReference type="PRINTS" id="PR01050">
    <property type="entry name" value="PYRUVTKNASE"/>
</dbReference>
<dbReference type="SUPFAM" id="SSF51621">
    <property type="entry name" value="Phosphoenolpyruvate/pyruvate domain"/>
    <property type="match status" value="1"/>
</dbReference>
<dbReference type="SUPFAM" id="SSF50800">
    <property type="entry name" value="PK beta-barrel domain-like"/>
    <property type="match status" value="1"/>
</dbReference>
<dbReference type="SUPFAM" id="SSF52935">
    <property type="entry name" value="PK C-terminal domain-like"/>
    <property type="match status" value="1"/>
</dbReference>
<dbReference type="PROSITE" id="PS00110">
    <property type="entry name" value="PYRUVATE_KINASE"/>
    <property type="match status" value="1"/>
</dbReference>
<reference key="1">
    <citation type="journal article" date="2003" name="Genome Res.">
        <title>Comparative complete genome sequence analysis of the amino acid replacements responsible for the thermostability of Corynebacterium efficiens.</title>
        <authorList>
            <person name="Nishio Y."/>
            <person name="Nakamura Y."/>
            <person name="Kawarabayasi Y."/>
            <person name="Usuda Y."/>
            <person name="Kimura E."/>
            <person name="Sugimoto S."/>
            <person name="Matsui K."/>
            <person name="Yamagishi A."/>
            <person name="Kikuchi H."/>
            <person name="Ikeo K."/>
            <person name="Gojobori T."/>
        </authorList>
    </citation>
    <scope>NUCLEOTIDE SEQUENCE [LARGE SCALE GENOMIC DNA]</scope>
    <source>
        <strain>DSM 44549 / YS-314 / AJ 12310 / JCM 11189 / NBRC 100395</strain>
    </source>
</reference>
<organism>
    <name type="scientific">Corynebacterium efficiens (strain DSM 44549 / YS-314 / AJ 12310 / JCM 11189 / NBRC 100395)</name>
    <dbReference type="NCBI Taxonomy" id="196164"/>
    <lineage>
        <taxon>Bacteria</taxon>
        <taxon>Bacillati</taxon>
        <taxon>Actinomycetota</taxon>
        <taxon>Actinomycetes</taxon>
        <taxon>Mycobacteriales</taxon>
        <taxon>Corynebacteriaceae</taxon>
        <taxon>Corynebacterium</taxon>
    </lineage>
</organism>